<organism>
    <name type="scientific">Homo sapiens</name>
    <name type="common">Human</name>
    <dbReference type="NCBI Taxonomy" id="9606"/>
    <lineage>
        <taxon>Eukaryota</taxon>
        <taxon>Metazoa</taxon>
        <taxon>Chordata</taxon>
        <taxon>Craniata</taxon>
        <taxon>Vertebrata</taxon>
        <taxon>Euteleostomi</taxon>
        <taxon>Mammalia</taxon>
        <taxon>Eutheria</taxon>
        <taxon>Euarchontoglires</taxon>
        <taxon>Primates</taxon>
        <taxon>Haplorrhini</taxon>
        <taxon>Catarrhini</taxon>
        <taxon>Hominidae</taxon>
        <taxon>Homo</taxon>
    </lineage>
</organism>
<protein>
    <recommendedName>
        <fullName>Olfactory receptor 2G3</fullName>
    </recommendedName>
    <alternativeName>
        <fullName>Olfactory receptor OR1-33</fullName>
    </alternativeName>
</protein>
<dbReference type="EMBL" id="AB065622">
    <property type="protein sequence ID" value="BAC05848.1"/>
    <property type="molecule type" value="Genomic_DNA"/>
</dbReference>
<dbReference type="EMBL" id="AL606804">
    <property type="status" value="NOT_ANNOTATED_CDS"/>
    <property type="molecule type" value="Genomic_DNA"/>
</dbReference>
<dbReference type="EMBL" id="CH471148">
    <property type="protein sequence ID" value="EAW77196.1"/>
    <property type="molecule type" value="Genomic_DNA"/>
</dbReference>
<dbReference type="EMBL" id="BC136712">
    <property type="protein sequence ID" value="AAI36713.1"/>
    <property type="molecule type" value="mRNA"/>
</dbReference>
<dbReference type="EMBL" id="BC136713">
    <property type="protein sequence ID" value="AAI36714.1"/>
    <property type="molecule type" value="mRNA"/>
</dbReference>
<dbReference type="EMBL" id="BK004417">
    <property type="protein sequence ID" value="DAA04815.1"/>
    <property type="status" value="ALT_INIT"/>
    <property type="molecule type" value="Genomic_DNA"/>
</dbReference>
<dbReference type="CCDS" id="CCDS31093.1"/>
<dbReference type="RefSeq" id="NP_001001914.1">
    <property type="nucleotide sequence ID" value="NM_001001914.1"/>
</dbReference>
<dbReference type="SMR" id="Q8NGZ4"/>
<dbReference type="FunCoup" id="Q8NGZ4">
    <property type="interactions" value="451"/>
</dbReference>
<dbReference type="STRING" id="9606.ENSP00000326301"/>
<dbReference type="GlyCosmos" id="Q8NGZ4">
    <property type="glycosylation" value="1 site, No reported glycans"/>
</dbReference>
<dbReference type="GlyGen" id="Q8NGZ4">
    <property type="glycosylation" value="2 sites"/>
</dbReference>
<dbReference type="iPTMnet" id="Q8NGZ4"/>
<dbReference type="PhosphoSitePlus" id="Q8NGZ4"/>
<dbReference type="BioMuta" id="OR2G3"/>
<dbReference type="DMDM" id="38372794"/>
<dbReference type="PaxDb" id="9606-ENSP00000326301"/>
<dbReference type="Antibodypedia" id="57416">
    <property type="antibodies" value="87 antibodies from 21 providers"/>
</dbReference>
<dbReference type="DNASU" id="81469"/>
<dbReference type="Ensembl" id="ENST00000320002.3">
    <property type="protein sequence ID" value="ENSP00000326301.2"/>
    <property type="gene ID" value="ENSG00000177476.3"/>
</dbReference>
<dbReference type="GeneID" id="81469"/>
<dbReference type="KEGG" id="hsa:81469"/>
<dbReference type="MANE-Select" id="ENST00000320002.3">
    <property type="protein sequence ID" value="ENSP00000326301.2"/>
    <property type="RefSeq nucleotide sequence ID" value="NM_001001914.1"/>
    <property type="RefSeq protein sequence ID" value="NP_001001914.1"/>
</dbReference>
<dbReference type="UCSC" id="uc010pyz.2">
    <property type="organism name" value="human"/>
</dbReference>
<dbReference type="AGR" id="HGNC:15008"/>
<dbReference type="CTD" id="81469"/>
<dbReference type="GeneCards" id="OR2G3"/>
<dbReference type="HGNC" id="HGNC:15008">
    <property type="gene designation" value="OR2G3"/>
</dbReference>
<dbReference type="HPA" id="ENSG00000177476">
    <property type="expression patterns" value="Not detected"/>
</dbReference>
<dbReference type="neXtProt" id="NX_Q8NGZ4"/>
<dbReference type="OpenTargets" id="ENSG00000177476"/>
<dbReference type="PharmGKB" id="PA32160"/>
<dbReference type="VEuPathDB" id="HostDB:ENSG00000177476"/>
<dbReference type="eggNOG" id="ENOG502SI2C">
    <property type="taxonomic scope" value="Eukaryota"/>
</dbReference>
<dbReference type="GeneTree" id="ENSGT01130000278266"/>
<dbReference type="HOGENOM" id="CLU_012526_1_2_1"/>
<dbReference type="InParanoid" id="Q8NGZ4"/>
<dbReference type="OMA" id="RLNHFIC"/>
<dbReference type="OrthoDB" id="5950740at2759"/>
<dbReference type="PAN-GO" id="Q8NGZ4">
    <property type="GO annotations" value="0 GO annotations based on evolutionary models"/>
</dbReference>
<dbReference type="PhylomeDB" id="Q8NGZ4"/>
<dbReference type="TreeFam" id="TF336512"/>
<dbReference type="PathwayCommons" id="Q8NGZ4"/>
<dbReference type="Reactome" id="R-HSA-9752946">
    <property type="pathway name" value="Expression and translocation of olfactory receptors"/>
</dbReference>
<dbReference type="BioGRID-ORCS" id="81469">
    <property type="hits" value="14 hits in 748 CRISPR screens"/>
</dbReference>
<dbReference type="GeneWiki" id="OR2G3"/>
<dbReference type="GenomeRNAi" id="81469"/>
<dbReference type="Pharos" id="Q8NGZ4">
    <property type="development level" value="Tdark"/>
</dbReference>
<dbReference type="PRO" id="PR:Q8NGZ4"/>
<dbReference type="Proteomes" id="UP000005640">
    <property type="component" value="Chromosome 1"/>
</dbReference>
<dbReference type="RNAct" id="Q8NGZ4">
    <property type="molecule type" value="protein"/>
</dbReference>
<dbReference type="ExpressionAtlas" id="Q8NGZ4">
    <property type="expression patterns" value="baseline and differential"/>
</dbReference>
<dbReference type="GO" id="GO:0005886">
    <property type="term" value="C:plasma membrane"/>
    <property type="evidence" value="ECO:0000318"/>
    <property type="project" value="GO_Central"/>
</dbReference>
<dbReference type="GO" id="GO:0004930">
    <property type="term" value="F:G protein-coupled receptor activity"/>
    <property type="evidence" value="ECO:0007669"/>
    <property type="project" value="UniProtKB-KW"/>
</dbReference>
<dbReference type="GO" id="GO:0004984">
    <property type="term" value="F:olfactory receptor activity"/>
    <property type="evidence" value="ECO:0000318"/>
    <property type="project" value="GO_Central"/>
</dbReference>
<dbReference type="GO" id="GO:0050911">
    <property type="term" value="P:detection of chemical stimulus involved in sensory perception of smell"/>
    <property type="evidence" value="ECO:0000318"/>
    <property type="project" value="GO_Central"/>
</dbReference>
<dbReference type="CDD" id="cd15947">
    <property type="entry name" value="7tmA_OR2B-like"/>
    <property type="match status" value="1"/>
</dbReference>
<dbReference type="FunFam" id="1.20.1070.10:FF:000005">
    <property type="entry name" value="Olfactory receptor"/>
    <property type="match status" value="1"/>
</dbReference>
<dbReference type="Gene3D" id="1.20.1070.10">
    <property type="entry name" value="Rhodopsin 7-helix transmembrane proteins"/>
    <property type="match status" value="1"/>
</dbReference>
<dbReference type="InterPro" id="IPR000276">
    <property type="entry name" value="GPCR_Rhodpsn"/>
</dbReference>
<dbReference type="InterPro" id="IPR017452">
    <property type="entry name" value="GPCR_Rhodpsn_7TM"/>
</dbReference>
<dbReference type="InterPro" id="IPR000725">
    <property type="entry name" value="Olfact_rcpt"/>
</dbReference>
<dbReference type="PANTHER" id="PTHR26453">
    <property type="entry name" value="OLFACTORY RECEPTOR"/>
    <property type="match status" value="1"/>
</dbReference>
<dbReference type="Pfam" id="PF13853">
    <property type="entry name" value="7tm_4"/>
    <property type="match status" value="1"/>
</dbReference>
<dbReference type="PRINTS" id="PR00237">
    <property type="entry name" value="GPCRRHODOPSN"/>
</dbReference>
<dbReference type="PRINTS" id="PR00245">
    <property type="entry name" value="OLFACTORYR"/>
</dbReference>
<dbReference type="SUPFAM" id="SSF81321">
    <property type="entry name" value="Family A G protein-coupled receptor-like"/>
    <property type="match status" value="1"/>
</dbReference>
<dbReference type="PROSITE" id="PS00237">
    <property type="entry name" value="G_PROTEIN_RECEP_F1_1"/>
    <property type="match status" value="1"/>
</dbReference>
<dbReference type="PROSITE" id="PS50262">
    <property type="entry name" value="G_PROTEIN_RECEP_F1_2"/>
    <property type="match status" value="1"/>
</dbReference>
<feature type="chain" id="PRO_0000150477" description="Olfactory receptor 2G3">
    <location>
        <begin position="1"/>
        <end position="309"/>
    </location>
</feature>
<feature type="topological domain" description="Extracellular" evidence="1">
    <location>
        <begin position="1"/>
        <end position="25"/>
    </location>
</feature>
<feature type="transmembrane region" description="Helical; Name=1" evidence="1">
    <location>
        <begin position="26"/>
        <end position="49"/>
    </location>
</feature>
<feature type="topological domain" description="Cytoplasmic" evidence="1">
    <location>
        <begin position="50"/>
        <end position="57"/>
    </location>
</feature>
<feature type="transmembrane region" description="Helical; Name=2" evidence="1">
    <location>
        <begin position="58"/>
        <end position="79"/>
    </location>
</feature>
<feature type="topological domain" description="Extracellular" evidence="1">
    <location>
        <begin position="80"/>
        <end position="100"/>
    </location>
</feature>
<feature type="transmembrane region" description="Helical; Name=3" evidence="1">
    <location>
        <begin position="101"/>
        <end position="120"/>
    </location>
</feature>
<feature type="topological domain" description="Cytoplasmic" evidence="1">
    <location>
        <begin position="121"/>
        <end position="139"/>
    </location>
</feature>
<feature type="transmembrane region" description="Helical; Name=4" evidence="1">
    <location>
        <begin position="140"/>
        <end position="158"/>
    </location>
</feature>
<feature type="topological domain" description="Extracellular" evidence="1">
    <location>
        <begin position="159"/>
        <end position="195"/>
    </location>
</feature>
<feature type="transmembrane region" description="Helical; Name=5" evidence="1">
    <location>
        <begin position="196"/>
        <end position="219"/>
    </location>
</feature>
<feature type="topological domain" description="Cytoplasmic" evidence="1">
    <location>
        <begin position="220"/>
        <end position="236"/>
    </location>
</feature>
<feature type="transmembrane region" description="Helical; Name=6" evidence="1">
    <location>
        <begin position="237"/>
        <end position="259"/>
    </location>
</feature>
<feature type="topological domain" description="Extracellular" evidence="1">
    <location>
        <begin position="260"/>
        <end position="272"/>
    </location>
</feature>
<feature type="transmembrane region" description="Helical; Name=7" evidence="1">
    <location>
        <begin position="273"/>
        <end position="292"/>
    </location>
</feature>
<feature type="topological domain" description="Cytoplasmic" evidence="1">
    <location>
        <begin position="293"/>
        <end position="309"/>
    </location>
</feature>
<feature type="glycosylation site" description="N-linked (GlcNAc...) asparagine" evidence="1">
    <location>
        <position position="5"/>
    </location>
</feature>
<feature type="disulfide bond" evidence="2">
    <location>
        <begin position="97"/>
        <end position="189"/>
    </location>
</feature>
<feature type="sequence variant" id="VAR_053141" description="In dbSNP:rs6658792.">
    <original>L</original>
    <variation>S</variation>
    <location>
        <position position="164"/>
    </location>
</feature>
<feature type="sequence variant" id="VAR_034178" description="In dbSNP:rs12072304.">
    <original>V</original>
    <variation>M</variation>
    <location>
        <position position="258"/>
    </location>
</feature>
<keyword id="KW-1003">Cell membrane</keyword>
<keyword id="KW-1015">Disulfide bond</keyword>
<keyword id="KW-0297">G-protein coupled receptor</keyword>
<keyword id="KW-0325">Glycoprotein</keyword>
<keyword id="KW-0472">Membrane</keyword>
<keyword id="KW-0552">Olfaction</keyword>
<keyword id="KW-0675">Receptor</keyword>
<keyword id="KW-1185">Reference proteome</keyword>
<keyword id="KW-0716">Sensory transduction</keyword>
<keyword id="KW-0807">Transducer</keyword>
<keyword id="KW-0812">Transmembrane</keyword>
<keyword id="KW-1133">Transmembrane helix</keyword>
<evidence type="ECO:0000255" key="1"/>
<evidence type="ECO:0000255" key="2">
    <source>
        <dbReference type="PROSITE-ProRule" id="PRU00521"/>
    </source>
</evidence>
<evidence type="ECO:0000305" key="3"/>
<sequence>MGLGNESSLMDFILLGFSDHPRLEAVLFVFVLFFYLLTLVGNFTIIIISYLDPPLHTPMYFFLSNLSLLDICFTTSLAPQTLVNLQRPKKTITYGGCVAQLYISLALGSTECILLADMALDRYIAVCKPLHYVVIMNPRLCQQLASISWLSGLASSLIHATFTLQLPLCGNHRLDHFICEVPALLKLACVDTTVNELVLFVVSVLFVVIPPALISISYGFITQAVLRIKSVEARHKAFSTCSSHLTVVIIFYGTIIYVYLQPSDSYAQDQGKFISLFYTMVTPTLNPIIYTLRNKDMKEALRKLLSGKL</sequence>
<reference key="1">
    <citation type="submission" date="2001-07" db="EMBL/GenBank/DDBJ databases">
        <title>Genome-wide discovery and analysis of human seven transmembrane helix receptor genes.</title>
        <authorList>
            <person name="Suwa M."/>
            <person name="Sato T."/>
            <person name="Okouchi I."/>
            <person name="Arita M."/>
            <person name="Futami K."/>
            <person name="Matsumoto S."/>
            <person name="Tsutsumi S."/>
            <person name="Aburatani H."/>
            <person name="Asai K."/>
            <person name="Akiyama Y."/>
        </authorList>
    </citation>
    <scope>NUCLEOTIDE SEQUENCE [GENOMIC DNA]</scope>
</reference>
<reference key="2">
    <citation type="journal article" date="2006" name="Nature">
        <title>The DNA sequence and biological annotation of human chromosome 1.</title>
        <authorList>
            <person name="Gregory S.G."/>
            <person name="Barlow K.F."/>
            <person name="McLay K.E."/>
            <person name="Kaul R."/>
            <person name="Swarbreck D."/>
            <person name="Dunham A."/>
            <person name="Scott C.E."/>
            <person name="Howe K.L."/>
            <person name="Woodfine K."/>
            <person name="Spencer C.C.A."/>
            <person name="Jones M.C."/>
            <person name="Gillson C."/>
            <person name="Searle S."/>
            <person name="Zhou Y."/>
            <person name="Kokocinski F."/>
            <person name="McDonald L."/>
            <person name="Evans R."/>
            <person name="Phillips K."/>
            <person name="Atkinson A."/>
            <person name="Cooper R."/>
            <person name="Jones C."/>
            <person name="Hall R.E."/>
            <person name="Andrews T.D."/>
            <person name="Lloyd C."/>
            <person name="Ainscough R."/>
            <person name="Almeida J.P."/>
            <person name="Ambrose K.D."/>
            <person name="Anderson F."/>
            <person name="Andrew R.W."/>
            <person name="Ashwell R.I.S."/>
            <person name="Aubin K."/>
            <person name="Babbage A.K."/>
            <person name="Bagguley C.L."/>
            <person name="Bailey J."/>
            <person name="Beasley H."/>
            <person name="Bethel G."/>
            <person name="Bird C.P."/>
            <person name="Bray-Allen S."/>
            <person name="Brown J.Y."/>
            <person name="Brown A.J."/>
            <person name="Buckley D."/>
            <person name="Burton J."/>
            <person name="Bye J."/>
            <person name="Carder C."/>
            <person name="Chapman J.C."/>
            <person name="Clark S.Y."/>
            <person name="Clarke G."/>
            <person name="Clee C."/>
            <person name="Cobley V."/>
            <person name="Collier R.E."/>
            <person name="Corby N."/>
            <person name="Coville G.J."/>
            <person name="Davies J."/>
            <person name="Deadman R."/>
            <person name="Dunn M."/>
            <person name="Earthrowl M."/>
            <person name="Ellington A.G."/>
            <person name="Errington H."/>
            <person name="Frankish A."/>
            <person name="Frankland J."/>
            <person name="French L."/>
            <person name="Garner P."/>
            <person name="Garnett J."/>
            <person name="Gay L."/>
            <person name="Ghori M.R.J."/>
            <person name="Gibson R."/>
            <person name="Gilby L.M."/>
            <person name="Gillett W."/>
            <person name="Glithero R.J."/>
            <person name="Grafham D.V."/>
            <person name="Griffiths C."/>
            <person name="Griffiths-Jones S."/>
            <person name="Grocock R."/>
            <person name="Hammond S."/>
            <person name="Harrison E.S.I."/>
            <person name="Hart E."/>
            <person name="Haugen E."/>
            <person name="Heath P.D."/>
            <person name="Holmes S."/>
            <person name="Holt K."/>
            <person name="Howden P.J."/>
            <person name="Hunt A.R."/>
            <person name="Hunt S.E."/>
            <person name="Hunter G."/>
            <person name="Isherwood J."/>
            <person name="James R."/>
            <person name="Johnson C."/>
            <person name="Johnson D."/>
            <person name="Joy A."/>
            <person name="Kay M."/>
            <person name="Kershaw J.K."/>
            <person name="Kibukawa M."/>
            <person name="Kimberley A.M."/>
            <person name="King A."/>
            <person name="Knights A.J."/>
            <person name="Lad H."/>
            <person name="Laird G."/>
            <person name="Lawlor S."/>
            <person name="Leongamornlert D.A."/>
            <person name="Lloyd D.M."/>
            <person name="Loveland J."/>
            <person name="Lovell J."/>
            <person name="Lush M.J."/>
            <person name="Lyne R."/>
            <person name="Martin S."/>
            <person name="Mashreghi-Mohammadi M."/>
            <person name="Matthews L."/>
            <person name="Matthews N.S.W."/>
            <person name="McLaren S."/>
            <person name="Milne S."/>
            <person name="Mistry S."/>
            <person name="Moore M.J.F."/>
            <person name="Nickerson T."/>
            <person name="O'Dell C.N."/>
            <person name="Oliver K."/>
            <person name="Palmeiri A."/>
            <person name="Palmer S.A."/>
            <person name="Parker A."/>
            <person name="Patel D."/>
            <person name="Pearce A.V."/>
            <person name="Peck A.I."/>
            <person name="Pelan S."/>
            <person name="Phelps K."/>
            <person name="Phillimore B.J."/>
            <person name="Plumb R."/>
            <person name="Rajan J."/>
            <person name="Raymond C."/>
            <person name="Rouse G."/>
            <person name="Saenphimmachak C."/>
            <person name="Sehra H.K."/>
            <person name="Sheridan E."/>
            <person name="Shownkeen R."/>
            <person name="Sims S."/>
            <person name="Skuce C.D."/>
            <person name="Smith M."/>
            <person name="Steward C."/>
            <person name="Subramanian S."/>
            <person name="Sycamore N."/>
            <person name="Tracey A."/>
            <person name="Tromans A."/>
            <person name="Van Helmond Z."/>
            <person name="Wall M."/>
            <person name="Wallis J.M."/>
            <person name="White S."/>
            <person name="Whitehead S.L."/>
            <person name="Wilkinson J.E."/>
            <person name="Willey D.L."/>
            <person name="Williams H."/>
            <person name="Wilming L."/>
            <person name="Wray P.W."/>
            <person name="Wu Z."/>
            <person name="Coulson A."/>
            <person name="Vaudin M."/>
            <person name="Sulston J.E."/>
            <person name="Durbin R.M."/>
            <person name="Hubbard T."/>
            <person name="Wooster R."/>
            <person name="Dunham I."/>
            <person name="Carter N.P."/>
            <person name="McVean G."/>
            <person name="Ross M.T."/>
            <person name="Harrow J."/>
            <person name="Olson M.V."/>
            <person name="Beck S."/>
            <person name="Rogers J."/>
            <person name="Bentley D.R."/>
        </authorList>
    </citation>
    <scope>NUCLEOTIDE SEQUENCE [LARGE SCALE GENOMIC DNA]</scope>
</reference>
<reference key="3">
    <citation type="submission" date="2005-07" db="EMBL/GenBank/DDBJ databases">
        <authorList>
            <person name="Mural R.J."/>
            <person name="Istrail S."/>
            <person name="Sutton G.G."/>
            <person name="Florea L."/>
            <person name="Halpern A.L."/>
            <person name="Mobarry C.M."/>
            <person name="Lippert R."/>
            <person name="Walenz B."/>
            <person name="Shatkay H."/>
            <person name="Dew I."/>
            <person name="Miller J.R."/>
            <person name="Flanigan M.J."/>
            <person name="Edwards N.J."/>
            <person name="Bolanos R."/>
            <person name="Fasulo D."/>
            <person name="Halldorsson B.V."/>
            <person name="Hannenhalli S."/>
            <person name="Turner R."/>
            <person name="Yooseph S."/>
            <person name="Lu F."/>
            <person name="Nusskern D.R."/>
            <person name="Shue B.C."/>
            <person name="Zheng X.H."/>
            <person name="Zhong F."/>
            <person name="Delcher A.L."/>
            <person name="Huson D.H."/>
            <person name="Kravitz S.A."/>
            <person name="Mouchard L."/>
            <person name="Reinert K."/>
            <person name="Remington K.A."/>
            <person name="Clark A.G."/>
            <person name="Waterman M.S."/>
            <person name="Eichler E.E."/>
            <person name="Adams M.D."/>
            <person name="Hunkapiller M.W."/>
            <person name="Myers E.W."/>
            <person name="Venter J.C."/>
        </authorList>
    </citation>
    <scope>NUCLEOTIDE SEQUENCE [LARGE SCALE GENOMIC DNA]</scope>
</reference>
<reference key="4">
    <citation type="journal article" date="2004" name="Genome Res.">
        <title>The status, quality, and expansion of the NIH full-length cDNA project: the Mammalian Gene Collection (MGC).</title>
        <authorList>
            <consortium name="The MGC Project Team"/>
        </authorList>
    </citation>
    <scope>NUCLEOTIDE SEQUENCE [LARGE SCALE MRNA]</scope>
    <source>
        <tissue>Brain</tissue>
    </source>
</reference>
<reference key="5">
    <citation type="journal article" date="2004" name="Proc. Natl. Acad. Sci. U.S.A.">
        <title>The human olfactory receptor gene family.</title>
        <authorList>
            <person name="Malnic B."/>
            <person name="Godfrey P.A."/>
            <person name="Buck L.B."/>
        </authorList>
    </citation>
    <scope>IDENTIFICATION</scope>
</reference>
<reference key="6">
    <citation type="journal article" date="2004" name="Proc. Natl. Acad. Sci. U.S.A.">
        <authorList>
            <person name="Malnic B."/>
            <person name="Godfrey P.A."/>
            <person name="Buck L.B."/>
        </authorList>
    </citation>
    <scope>ERRATUM OF PUBMED:14983052</scope>
</reference>
<name>OR2G3_HUMAN</name>
<proteinExistence type="evidence at transcript level"/>
<accession>Q8NGZ4</accession>
<accession>B2RN64</accession>
<accession>Q5JQT1</accession>
<accession>Q6IF45</accession>
<comment type="function">
    <text evidence="3">Odorant receptor.</text>
</comment>
<comment type="subcellular location">
    <subcellularLocation>
        <location>Cell membrane</location>
        <topology>Multi-pass membrane protein</topology>
    </subcellularLocation>
</comment>
<comment type="similarity">
    <text evidence="2">Belongs to the G-protein coupled receptor 1 family.</text>
</comment>
<comment type="sequence caution" evidence="3">
    <conflict type="erroneous initiation">
        <sequence resource="EMBL-CDS" id="DAA04815"/>
    </conflict>
</comment>
<comment type="online information" name="Human Olfactory Receptor Data Exploratorium (HORDE)">
    <link uri="http://genome.weizmann.ac.il/horde/card/index/symbol:OR2G3"/>
</comment>
<gene>
    <name type="primary">OR2G3</name>
</gene>